<evidence type="ECO:0000250" key="1">
    <source>
        <dbReference type="UniProtKB" id="P02452"/>
    </source>
</evidence>
<evidence type="ECO:0000250" key="2">
    <source>
        <dbReference type="UniProtKB" id="P02454"/>
    </source>
</evidence>
<evidence type="ECO:0000250" key="3">
    <source>
        <dbReference type="UniProtKB" id="P02457"/>
    </source>
</evidence>
<evidence type="ECO:0000250" key="4">
    <source>
        <dbReference type="UniProtKB" id="P11087"/>
    </source>
</evidence>
<evidence type="ECO:0000256" key="5">
    <source>
        <dbReference type="SAM" id="MobiDB-lite"/>
    </source>
</evidence>
<evidence type="ECO:0000269" key="6">
    <source>
    </source>
</evidence>
<evidence type="ECO:0000303" key="7">
    <source>
    </source>
</evidence>
<evidence type="ECO:0000305" key="8"/>
<sequence>GGISVPGPMGPSGPRGLPGPPGPGPQGFQGPPGEPGEPGSSGPMGPRGPPGPPGKNGDDGEAGKPGRPGERGPPGPQGARGLPGTAGLPGMKGHRGFSGLDGAKGDAGPAGPKGEPGSPGENGAPGQMGPRGPGERGRPGASGPAGARGNDGATGAAGPPGPTGPAGPPGFPGAVGAKGEAGPQGARGSEGPQGVRGEPGPPGPAGAAGPAGNPGADGQPGAKGANGAPGIAGAPGFPGARGPSGPQGPSGPPGPKGNSGEPGAPGGEPGPTGIQGPPGPAGEEGKRGARGEPGPTGLPGPPGERGGPGSRGFPGADGVAGPKGSPGEAGRPGEAGLPGAKGLTGSPGSPGPDGKTGPPGPAGQDGRPGPPGPPGARGQAGVMGFPGPKGAAGEPGKAGERGVPGPPGAVGPAGKDGEAGAQGPPGPAGPAGERGEQGPAGPGFQGLPGPAGPPGEAGKPGEQGVPGDLGAPGPSGARGERGFPGERGVQGPPGPAGPRGSSQGAPGLQGMPGERGAAGLPGPKGDRGDAGPKGADGAPGKDGVRGLTGPIGPPGPAGAPGDKGESGPSGPAGPTGARGAPGDRGEPGPPGPAGFAGPPGADGQPGAKGEPGDAGAKGDAGPPGPAGPTGAPGPIGNLGAPGPKGARGSAGPPGATGFPGAAGRVGPPGPSGNAGPPGPPGPVGKEGGKGPRGETGPAGEVGPPGPPGPSGEKGSPGADGPAGAPGTPGPQGISGQRGVVGLPGQRGERGFPGLPGPSGEPGKQGPSGSSGERGPPGPMGPPGLAGPPGESGREGPGAEGSPGRDGSPGPKGDRGEGPPGAPGAPGAPGPVGPAGKSGDRGETGPGPAGPAGPAGARGPAGPQGPRGDKGETGEQGDRGIKGHRGFSGLQGPAGPPGSPGEQGPSGASGPAGPRGPPGSAGSPGKDGLNGLPGPIGPPGPRGRTGDAGPVGPPGPPGPPGPPGPP</sequence>
<organism evidence="7">
    <name type="scientific">Acratocnus sp. (strain SLP-2019)</name>
    <name type="common">Ground sloth</name>
    <dbReference type="NCBI Taxonomy" id="2546662"/>
    <lineage>
        <taxon>Eukaryota</taxon>
        <taxon>Metazoa</taxon>
        <taxon>Chordata</taxon>
        <taxon>Craniata</taxon>
        <taxon>Vertebrata</taxon>
        <taxon>Euteleostomi</taxon>
        <taxon>Mammalia</taxon>
        <taxon>Eutheria</taxon>
        <taxon>Xenarthra</taxon>
        <taxon>Pilosa</taxon>
        <taxon>Folivora</taxon>
        <taxon>Megalonychidae</taxon>
        <taxon>Acratocnus</taxon>
    </lineage>
</organism>
<protein>
    <recommendedName>
        <fullName evidence="7">Collagen alpha-1(I) chain</fullName>
    </recommendedName>
    <alternativeName>
        <fullName evidence="1">Alpha-1 type I collagen</fullName>
    </alternativeName>
</protein>
<dbReference type="GO" id="GO:0031012">
    <property type="term" value="C:extracellular matrix"/>
    <property type="evidence" value="ECO:0007669"/>
    <property type="project" value="TreeGrafter"/>
</dbReference>
<dbReference type="GO" id="GO:0005615">
    <property type="term" value="C:extracellular space"/>
    <property type="evidence" value="ECO:0007669"/>
    <property type="project" value="TreeGrafter"/>
</dbReference>
<dbReference type="InterPro" id="IPR008160">
    <property type="entry name" value="Collagen"/>
</dbReference>
<dbReference type="InterPro" id="IPR050149">
    <property type="entry name" value="Collagen_superfamily"/>
</dbReference>
<dbReference type="PANTHER" id="PTHR24023">
    <property type="entry name" value="COLLAGEN ALPHA"/>
    <property type="match status" value="1"/>
</dbReference>
<dbReference type="PANTHER" id="PTHR24023:SF1082">
    <property type="entry name" value="COLLAGEN TRIPLE HELIX REPEAT"/>
    <property type="match status" value="1"/>
</dbReference>
<dbReference type="Pfam" id="PF01391">
    <property type="entry name" value="Collagen"/>
    <property type="match status" value="10"/>
</dbReference>
<feature type="chain" id="PRO_0000448450" description="Collagen alpha-1(I) chain">
    <location>
        <begin position="1"/>
        <end position="965"/>
    </location>
</feature>
<feature type="region of interest" description="Disordered" evidence="5">
    <location>
        <begin position="1"/>
        <end position="965"/>
    </location>
</feature>
<feature type="compositionally biased region" description="Low complexity" evidence="5">
    <location>
        <begin position="26"/>
        <end position="44"/>
    </location>
</feature>
<feature type="compositionally biased region" description="Basic and acidic residues" evidence="5">
    <location>
        <begin position="56"/>
        <end position="70"/>
    </location>
</feature>
<feature type="compositionally biased region" description="Low complexity" evidence="5">
    <location>
        <begin position="106"/>
        <end position="122"/>
    </location>
</feature>
<feature type="compositionally biased region" description="Low complexity" evidence="5">
    <location>
        <begin position="139"/>
        <end position="157"/>
    </location>
</feature>
<feature type="compositionally biased region" description="Pro residues" evidence="5">
    <location>
        <begin position="159"/>
        <end position="171"/>
    </location>
</feature>
<feature type="compositionally biased region" description="Low complexity" evidence="5">
    <location>
        <begin position="205"/>
        <end position="244"/>
    </location>
</feature>
<feature type="compositionally biased region" description="Gly residues" evidence="5">
    <location>
        <begin position="303"/>
        <end position="312"/>
    </location>
</feature>
<feature type="compositionally biased region" description="Low complexity" evidence="5">
    <location>
        <begin position="341"/>
        <end position="367"/>
    </location>
</feature>
<feature type="compositionally biased region" description="Low complexity" evidence="5">
    <location>
        <begin position="376"/>
        <end position="395"/>
    </location>
</feature>
<feature type="compositionally biased region" description="Low complexity" evidence="5">
    <location>
        <begin position="454"/>
        <end position="463"/>
    </location>
</feature>
<feature type="compositionally biased region" description="Low complexity" evidence="5">
    <location>
        <begin position="566"/>
        <end position="580"/>
    </location>
</feature>
<feature type="compositionally biased region" description="Low complexity" evidence="5">
    <location>
        <begin position="593"/>
        <end position="620"/>
    </location>
</feature>
<feature type="compositionally biased region" description="Low complexity" evidence="5">
    <location>
        <begin position="649"/>
        <end position="665"/>
    </location>
</feature>
<feature type="compositionally biased region" description="Low complexity" evidence="5">
    <location>
        <begin position="710"/>
        <end position="725"/>
    </location>
</feature>
<feature type="compositionally biased region" description="Pro residues" evidence="5">
    <location>
        <begin position="775"/>
        <end position="785"/>
    </location>
</feature>
<feature type="compositionally biased region" description="Pro residues" evidence="5">
    <location>
        <begin position="819"/>
        <end position="831"/>
    </location>
</feature>
<feature type="compositionally biased region" description="Low complexity" evidence="5">
    <location>
        <begin position="851"/>
        <end position="865"/>
    </location>
</feature>
<feature type="compositionally biased region" description="Basic and acidic residues" evidence="5">
    <location>
        <begin position="866"/>
        <end position="880"/>
    </location>
</feature>
<feature type="compositionally biased region" description="Low complexity" evidence="5">
    <location>
        <begin position="899"/>
        <end position="932"/>
    </location>
</feature>
<feature type="compositionally biased region" description="Pro residues" evidence="5">
    <location>
        <begin position="950"/>
        <end position="965"/>
    </location>
</feature>
<feature type="modified residue" description="4-hydroxyproline" evidence="3">
    <location>
        <position position="18"/>
    </location>
</feature>
<feature type="modified residue" description="4-hydroxyproline" evidence="3">
    <location>
        <position position="21"/>
    </location>
</feature>
<feature type="modified residue" description="4-hydroxyproline" evidence="3">
    <location>
        <position position="23"/>
    </location>
</feature>
<feature type="modified residue" description="4-hydroxyproline" evidence="3">
    <location>
        <position position="32"/>
    </location>
</feature>
<feature type="modified residue" description="4-hydroxyproline" evidence="3">
    <location>
        <position position="35"/>
    </location>
</feature>
<feature type="modified residue" description="4-hydroxyproline" evidence="3">
    <location>
        <position position="38"/>
    </location>
</feature>
<feature type="modified residue" description="4-hydroxyproline" evidence="3">
    <location>
        <position position="53"/>
    </location>
</feature>
<feature type="modified residue" description="4-hydroxyproline" evidence="3">
    <location>
        <position position="68"/>
    </location>
</feature>
<feature type="modified residue" description="4-hydroxyproline" evidence="3">
    <location>
        <position position="74"/>
    </location>
</feature>
<feature type="modified residue" description="4-hydroxyproline" evidence="3">
    <location>
        <position position="83"/>
    </location>
</feature>
<feature type="modified residue" description="4-hydroxyproline" evidence="3">
    <location>
        <position position="89"/>
    </location>
</feature>
<feature type="modified residue" description="5-hydroxylysine; alternate" evidence="1">
    <location>
        <position position="92"/>
    </location>
</feature>
<feature type="modified residue" description="Phosphoserine" evidence="2">
    <location>
        <position position="98"/>
    </location>
</feature>
<feature type="modified residue" description="4-hydroxyproline" evidence="3">
    <location>
        <position position="116"/>
    </location>
</feature>
<feature type="modified residue" description="4-hydroxyproline" evidence="3">
    <location>
        <position position="119"/>
    </location>
</feature>
<feature type="modified residue" description="4-hydroxyproline" evidence="3">
    <location>
        <position position="125"/>
    </location>
</feature>
<feature type="modified residue" description="4-hydroxyproline" evidence="3">
    <location>
        <position position="139"/>
    </location>
</feature>
<feature type="modified residue" description="4-hydroxyproline" evidence="3">
    <location>
        <position position="160"/>
    </location>
</feature>
<feature type="modified residue" description="4-hydroxyproline" evidence="3">
    <location>
        <position position="169"/>
    </location>
</feature>
<feature type="modified residue" description="4-hydroxyproline" evidence="3">
    <location>
        <position position="172"/>
    </location>
</feature>
<feature type="modified residue" description="4-hydroxyproline" evidence="3">
    <location>
        <position position="199"/>
    </location>
</feature>
<feature type="modified residue" description="4-hydroxyproline" evidence="3">
    <location>
        <position position="202"/>
    </location>
</feature>
<feature type="modified residue" description="4-hydroxyproline" evidence="3">
    <location>
        <position position="214"/>
    </location>
</feature>
<feature type="modified residue" description="4-hydroxyproline" evidence="3">
    <location>
        <position position="220"/>
    </location>
</feature>
<feature type="modified residue" description="4-hydroxyproline" evidence="3">
    <location>
        <position position="229"/>
    </location>
</feature>
<feature type="modified residue" description="4-hydroxyproline" evidence="3">
    <location>
        <position position="235"/>
    </location>
</feature>
<feature type="modified residue" description="4-hydroxyproline" evidence="3">
    <location>
        <position position="238"/>
    </location>
</feature>
<feature type="modified residue" description="4-hydroxyproline" evidence="3">
    <location>
        <position position="253"/>
    </location>
</feature>
<feature type="modified residue" description="5-hydroxylysine" evidence="3">
    <location>
        <position position="256"/>
    </location>
</feature>
<feature type="modified residue" description="4-hydroxyproline" evidence="3">
    <location>
        <position position="262"/>
    </location>
</feature>
<feature type="modified residue" description="4-hydroxyproline" evidence="3">
    <location>
        <position position="265"/>
    </location>
</feature>
<feature type="modified residue" description="4-hydroxyproline" evidence="3">
    <location>
        <position position="269"/>
    </location>
</feature>
<feature type="modified residue" description="4-hydroxyproline" evidence="3">
    <location>
        <position position="278"/>
    </location>
</feature>
<feature type="modified residue" description="4-hydroxyproline" evidence="3">
    <location>
        <position position="293"/>
    </location>
</feature>
<feature type="modified residue" description="4-hydroxyproline" evidence="3">
    <location>
        <position position="299"/>
    </location>
</feature>
<feature type="modified residue" description="4-hydroxyproline" evidence="3">
    <location>
        <position position="308"/>
    </location>
</feature>
<feature type="modified residue" description="4-hydroxyproline" evidence="3">
    <location>
        <position position="314"/>
    </location>
</feature>
<feature type="modified residue" description="5-hydroxylysine" evidence="3">
    <location>
        <position position="323"/>
    </location>
</feature>
<feature type="modified residue" description="4-hydroxyproline" evidence="3">
    <location>
        <position position="326"/>
    </location>
</feature>
<feature type="modified residue" description="4-hydroxyproline" evidence="3">
    <location>
        <position position="332"/>
    </location>
</feature>
<feature type="modified residue" description="4-hydroxyproline" evidence="3">
    <location>
        <position position="338"/>
    </location>
</feature>
<feature type="modified residue" description="4-hydroxyproline" evidence="3">
    <location>
        <position position="347"/>
    </location>
</feature>
<feature type="modified residue" description="4-hydroxyproline" evidence="3">
    <location>
        <position position="350"/>
    </location>
</feature>
<feature type="modified residue" description="4-hydroxyproline" evidence="3">
    <location>
        <position position="359"/>
    </location>
</feature>
<feature type="modified residue" description="4-hydroxyproline" evidence="3">
    <location>
        <position position="368"/>
    </location>
</feature>
<feature type="modified residue" description="4-hydroxyproline" evidence="3">
    <location>
        <position position="374"/>
    </location>
</feature>
<feature type="modified residue" description="4-hydroxyproline" evidence="3">
    <location>
        <position position="386"/>
    </location>
</feature>
<feature type="modified residue" description="4-hydroxyproline" evidence="3">
    <location>
        <position position="395"/>
    </location>
</feature>
<feature type="modified residue" description="4-hydroxyproline" evidence="3">
    <location>
        <position position="404"/>
    </location>
</feature>
<feature type="modified residue" description="4-hydroxyproline" evidence="3">
    <location>
        <position position="407"/>
    </location>
</feature>
<feature type="modified residue" description="4-hydroxyproline" evidence="3">
    <location>
        <position position="425"/>
    </location>
</feature>
<feature type="modified residue" description="4-hydroxyproline" evidence="3">
    <location>
        <position position="442"/>
    </location>
</feature>
<feature type="modified residue" description="4-hydroxyproline" evidence="3">
    <location>
        <position position="448"/>
    </location>
</feature>
<feature type="modified residue" description="4-hydroxyproline" evidence="3">
    <location>
        <position position="454"/>
    </location>
</feature>
<feature type="modified residue" description="4-hydroxyproline" evidence="3">
    <location>
        <position position="460"/>
    </location>
</feature>
<feature type="modified residue" description="4-hydroxyproline" evidence="3">
    <location>
        <position position="466"/>
    </location>
</feature>
<feature type="modified residue" description="4-hydroxyproline" evidence="3">
    <location>
        <position position="472"/>
    </location>
</feature>
<feature type="modified residue" description="4-hydroxyproline" evidence="3">
    <location>
        <position position="484"/>
    </location>
</feature>
<feature type="modified residue" description="4-hydroxyproline" evidence="3">
    <location>
        <position position="493"/>
    </location>
</feature>
<feature type="modified residue" description="4-hydroxyproline" evidence="3">
    <location>
        <position position="506"/>
    </location>
</feature>
<feature type="modified residue" description="4-hydroxyproline" evidence="3">
    <location>
        <position position="512"/>
    </location>
</feature>
<feature type="modified residue" description="4-hydroxyproline" evidence="3">
    <location>
        <position position="521"/>
    </location>
</feature>
<feature type="modified residue" description="5-hydroxylysine" evidence="3">
    <location>
        <position position="533"/>
    </location>
</feature>
<feature type="modified residue" description="4-hydroxyproline" evidence="3">
    <location>
        <position position="539"/>
    </location>
</feature>
<feature type="modified residue" description="4-hydroxyproline" evidence="3">
    <location>
        <position position="554"/>
    </location>
</feature>
<feature type="modified residue" description="4-hydroxyproline" evidence="3">
    <location>
        <position position="560"/>
    </location>
</feature>
<feature type="modified residue" description="Phosphoserine" evidence="2">
    <location>
        <position position="569"/>
    </location>
</feature>
<feature type="modified residue" description="4-hydroxyproline" evidence="3">
    <location>
        <position position="581"/>
    </location>
</feature>
<feature type="modified residue" description="4-hydroxyproline" evidence="3">
    <location>
        <position position="587"/>
    </location>
</feature>
<feature type="modified residue" description="4-hydroxyproline" evidence="3">
    <location>
        <position position="590"/>
    </location>
</feature>
<feature type="modified residue" description="4-hydroxyproline" evidence="3">
    <location>
        <position position="599"/>
    </location>
</feature>
<feature type="modified residue" description="4-hydroxyproline" evidence="3">
    <location>
        <position position="605"/>
    </location>
</feature>
<feature type="modified residue" description="4-hydroxyproline" evidence="3">
    <location>
        <position position="623"/>
    </location>
</feature>
<feature type="modified residue" description="4-hydroxyproline" evidence="3">
    <location>
        <position position="632"/>
    </location>
</feature>
<feature type="modified residue" description="4-hydroxyproline" evidence="3">
    <location>
        <position position="641"/>
    </location>
</feature>
<feature type="modified residue" description="5-hydroxylysine" evidence="3">
    <location>
        <position position="644"/>
    </location>
</feature>
<feature type="modified residue" description="4-hydroxyproline" evidence="3">
    <location>
        <position position="653"/>
    </location>
</feature>
<feature type="modified residue" description="4-hydroxyproline" evidence="3">
    <location>
        <position position="659"/>
    </location>
</feature>
<feature type="modified residue" description="3-hydroxyproline" evidence="4">
    <location>
        <position position="667"/>
    </location>
</feature>
<feature type="modified residue" description="4-hydroxyproline" evidence="4">
    <location>
        <position position="668"/>
    </location>
</feature>
<feature type="modified residue" description="4-hydroxyproline" evidence="4">
    <location>
        <position position="677"/>
    </location>
</feature>
<feature type="modified residue" description="4-hydroxyproline" evidence="4">
    <location>
        <position position="680"/>
    </location>
</feature>
<feature type="modified residue" description="4-hydroxyproline" evidence="3">
    <location>
        <position position="716"/>
    </location>
</feature>
<feature type="modified residue" description="4-hydroxyproline" evidence="3">
    <location>
        <position position="725"/>
    </location>
</feature>
<feature type="modified residue" description="4-hydroxyproline" evidence="3">
    <location>
        <position position="743"/>
    </location>
</feature>
<feature type="modified residue" description="4-hydroxyproline" evidence="3">
    <location>
        <position position="752"/>
    </location>
</feature>
<feature type="modified residue" description="4-hydroxyproline" evidence="3">
    <location>
        <position position="755"/>
    </location>
</feature>
<feature type="modified residue" description="4-hydroxyproline" evidence="3">
    <location>
        <position position="761"/>
    </location>
</feature>
<feature type="modified residue" description="4-hydroxyproline" evidence="3">
    <location>
        <position position="776"/>
    </location>
</feature>
<feature type="modified residue" description="4-hydroxyproline" evidence="3">
    <location>
        <position position="782"/>
    </location>
</feature>
<feature type="modified residue" description="4-hydroxyproline" evidence="3">
    <location>
        <position position="788"/>
    </location>
</feature>
<feature type="modified residue" description="4-hydroxyproline" evidence="3">
    <location>
        <position position="796"/>
    </location>
</feature>
<feature type="modified residue" description="4-hydroxyproline" evidence="3">
    <location>
        <position position="802"/>
    </location>
</feature>
<feature type="modified residue" description="5-hydroxylysine" evidence="3">
    <location>
        <position position="811"/>
    </location>
</feature>
<feature type="modified residue" description="4-hydroxyproline" evidence="3">
    <location>
        <position position="819"/>
    </location>
</feature>
<feature type="modified residue" description="4-hydroxyproline" evidence="3">
    <location>
        <position position="822"/>
    </location>
</feature>
<feature type="modified residue" description="4-hydroxyproline" evidence="3">
    <location>
        <position position="825"/>
    </location>
</feature>
<feature type="modified residue" description="5-hydroxylysine" evidence="3">
    <location>
        <position position="869"/>
    </location>
</feature>
<feature type="modified residue" description="5-hydroxylysine; alternate" evidence="3">
    <location>
        <position position="881"/>
    </location>
</feature>
<feature type="modified residue" description="4-hydroxyproline" evidence="3">
    <location>
        <position position="896"/>
    </location>
</feature>
<feature type="modified residue" description="4-hydroxyproline" evidence="3">
    <location>
        <position position="899"/>
    </location>
</feature>
<feature type="modified residue" description="4-hydroxyproline" evidence="3">
    <location>
        <position position="917"/>
    </location>
</feature>
<feature type="modified residue" description="4-hydroxyproline" evidence="4">
    <location>
        <position position="932"/>
    </location>
</feature>
<feature type="modified residue" description="3-hydroxyproline" evidence="4">
    <location>
        <position position="937"/>
    </location>
</feature>
<feature type="modified residue" description="4-hydroxyproline" evidence="4">
    <location>
        <position position="938"/>
    </location>
</feature>
<feature type="modified residue" description="3-hydroxyproline" evidence="4">
    <location>
        <position position="952"/>
    </location>
</feature>
<feature type="modified residue" description="4-hydroxyproline" evidence="4">
    <location>
        <position position="953"/>
    </location>
</feature>
<feature type="modified residue" description="3-hydroxyproline" evidence="4">
    <location>
        <position position="955"/>
    </location>
</feature>
<feature type="modified residue" description="4-hydroxyproline" evidence="4">
    <location>
        <position position="956"/>
    </location>
</feature>
<feature type="modified residue" description="3-hydroxyproline" evidence="4">
    <location>
        <position position="958"/>
    </location>
</feature>
<feature type="modified residue" description="4-hydroxyproline" evidence="4">
    <location>
        <position position="959"/>
    </location>
</feature>
<feature type="modified residue" description="4-hydroxyproline" evidence="4">
    <location>
        <position position="962"/>
    </location>
</feature>
<feature type="modified residue" description="4-hydroxyproline" evidence="4">
    <location>
        <position position="965"/>
    </location>
</feature>
<feature type="glycosylation site" description="O-linked (Gal...) hydroxylysine; alternate" evidence="1">
    <location>
        <position position="92"/>
    </location>
</feature>
<feature type="glycosylation site" description="O-linked (Gal...) hydroxylysine; alternate" evidence="3">
    <location>
        <position position="881"/>
    </location>
</feature>
<feature type="unsure residue" description="I or L" evidence="7">
    <location>
        <position position="3"/>
    </location>
</feature>
<feature type="unsure residue" description="L or I" evidence="7">
    <location>
        <position position="17"/>
    </location>
</feature>
<feature type="unsure residue" description="L or I" evidence="7">
    <location>
        <position position="82"/>
    </location>
</feature>
<feature type="unsure residue" description="L or I" evidence="7">
    <location>
        <position position="88"/>
    </location>
</feature>
<feature type="unsure residue" description="L or I" evidence="7">
    <location>
        <position position="100"/>
    </location>
</feature>
<feature type="unsure residue" description="I or L" evidence="7">
    <location>
        <position position="231"/>
    </location>
</feature>
<feature type="unsure residue" description="I or L" evidence="7">
    <location>
        <position position="274"/>
    </location>
</feature>
<feature type="unsure residue" description="L or I" evidence="7">
    <location>
        <position position="298"/>
    </location>
</feature>
<feature type="unsure residue" description="L or I" evidence="7">
    <location>
        <position position="337"/>
    </location>
</feature>
<feature type="unsure residue" description="L or I" evidence="7">
    <location>
        <position position="343"/>
    </location>
</feature>
<feature type="unsure residue" description="L or I" evidence="7">
    <location>
        <position position="447"/>
    </location>
</feature>
<feature type="unsure residue" description="L or I" evidence="7">
    <location>
        <position position="469"/>
    </location>
</feature>
<feature type="unsure residue" description="L or I" evidence="7">
    <location>
        <position position="508"/>
    </location>
</feature>
<feature type="unsure residue" description="L or I" evidence="7">
    <location>
        <position position="520"/>
    </location>
</feature>
<feature type="unsure residue" description="L or I" evidence="7">
    <location>
        <position position="547"/>
    </location>
</feature>
<feature type="unsure residue" description="I or L" evidence="7">
    <location>
        <position position="551"/>
    </location>
</feature>
<feature type="unsure residue" description="I or L" evidence="7">
    <location>
        <position position="635"/>
    </location>
</feature>
<feature type="unsure residue" description="L or I" evidence="7">
    <location>
        <position position="638"/>
    </location>
</feature>
<feature type="unsure residue" description="I or L" evidence="7">
    <location>
        <position position="733"/>
    </location>
</feature>
<feature type="unsure residue" description="L or I" evidence="7">
    <location>
        <position position="742"/>
    </location>
</feature>
<feature type="unsure residue" description="L or I" evidence="7">
    <location>
        <position position="754"/>
    </location>
</feature>
<feature type="unsure residue" description="L or I" evidence="7">
    <location>
        <position position="784"/>
    </location>
</feature>
<feature type="unsure residue" description="I or L" evidence="7">
    <location>
        <position position="880"/>
    </location>
</feature>
<feature type="unsure residue" description="L or I" evidence="7">
    <location>
        <position position="889"/>
    </location>
</feature>
<feature type="unsure residue" description="L or I" evidence="7">
    <location>
        <position position="928"/>
    </location>
</feature>
<feature type="unsure residue" description="L or I" evidence="7">
    <location>
        <position position="931"/>
    </location>
</feature>
<feature type="unsure residue" description="I or L" evidence="7">
    <location>
        <position position="935"/>
    </location>
</feature>
<feature type="non-consecutive residues" evidence="7">
    <location>
        <begin position="22"/>
        <end position="23"/>
    </location>
</feature>
<feature type="non-consecutive residues" evidence="7">
    <location>
        <begin position="132"/>
        <end position="133"/>
    </location>
</feature>
<feature type="non-consecutive residues" evidence="7">
    <location>
        <begin position="266"/>
        <end position="267"/>
    </location>
</feature>
<feature type="non-consecutive residues" evidence="7">
    <location>
        <begin position="323"/>
        <end position="324"/>
    </location>
</feature>
<feature type="non-consecutive residues" evidence="7">
    <location>
        <begin position="441"/>
        <end position="442"/>
    </location>
</feature>
<feature type="non-consecutive residues" evidence="7">
    <location>
        <begin position="501"/>
        <end position="502"/>
    </location>
</feature>
<feature type="non-consecutive residues" evidence="7">
    <location>
        <begin position="698"/>
        <end position="699"/>
    </location>
</feature>
<feature type="non-consecutive residues" evidence="7">
    <location>
        <begin position="795"/>
        <end position="796"/>
    </location>
</feature>
<feature type="non-consecutive residues" evidence="7">
    <location>
        <begin position="816"/>
        <end position="817"/>
    </location>
</feature>
<feature type="non-consecutive residues" evidence="7">
    <location>
        <begin position="845"/>
        <end position="846"/>
    </location>
</feature>
<feature type="non-terminal residue" evidence="7">
    <location>
        <position position="1"/>
    </location>
</feature>
<feature type="non-terminal residue" evidence="7">
    <location>
        <position position="965"/>
    </location>
</feature>
<reference evidence="8" key="1">
    <citation type="journal article" date="2019" name="Nat. Ecol. Evol.">
        <title>Palaeoproteomics resolves sloth relationships.</title>
        <authorList>
            <person name="Presslee S."/>
            <person name="Slater G.J."/>
            <person name="Pujos F."/>
            <person name="Forasiepi A.M."/>
            <person name="Fischer R."/>
            <person name="Molloy K."/>
            <person name="Mackie M."/>
            <person name="Olsen J.V."/>
            <person name="Kramarz A."/>
            <person name="Taglioretti M."/>
            <person name="Scaglia F."/>
            <person name="Lezcano M."/>
            <person name="Lanata J.L."/>
            <person name="Southon J."/>
            <person name="Feranec R."/>
            <person name="Bloch J."/>
            <person name="Hajduk A."/>
            <person name="Martin F.M."/>
            <person name="Salas Gismondi R."/>
            <person name="Reguero M."/>
            <person name="de Muizon C."/>
            <person name="Greenwood A."/>
            <person name="Chait B.T."/>
            <person name="Penkman K."/>
            <person name="Collins M."/>
            <person name="MacPhee R.D.E."/>
        </authorList>
    </citation>
    <scope>PROTEIN SEQUENCE</scope>
    <scope>TISSUE SPECIFICITY</scope>
    <scope>IDENTIFICATION BY MASS SPECTROMETRY</scope>
    <source>
        <tissue evidence="7">Bone</tissue>
    </source>
</reference>
<accession>C0HLH3</accession>
<comment type="function">
    <text evidence="8">Type I collagen is a member of group I collagen (fibrillar forming collagen).</text>
</comment>
<comment type="subunit">
    <text evidence="8">Trimers of one alpha 2(I) and two alpha 1(I) chains.</text>
</comment>
<comment type="subcellular location">
    <subcellularLocation>
        <location>Secreted</location>
    </subcellularLocation>
    <subcellularLocation>
        <location>Secreted</location>
        <location>Extracellular space</location>
    </subcellularLocation>
    <subcellularLocation>
        <location evidence="8">Secreted</location>
        <location evidence="8">Extracellular space</location>
        <location evidence="8">Extracellular matrix</location>
    </subcellularLocation>
</comment>
<comment type="tissue specificity">
    <text evidence="6">Expressed in bones.</text>
</comment>
<comment type="PTM">
    <text evidence="1">Contains mostly 4-hydroxyproline. Proline residues at the third position of the tripeptide repeating unit (G-X-Y) are hydroxylated in some or all of the chains.</text>
</comment>
<comment type="PTM">
    <text evidence="4">Contains 3-hydroxyproline at a few sites. This modification occurs on the first proline residue in the sequence motif Gly-Pro-Hyp, where Hyp is 4-hydroxyproline.</text>
</comment>
<comment type="PTM">
    <text evidence="1">Lysine residues at the third position of the tripeptide repeating unit (G-X-Y) are 5-hydroxylated in some or all of the chains.</text>
</comment>
<comment type="PTM">
    <text evidence="1">O-glycosylated on hydroxylated lysine residues. The O-linked glycan consists of a Glc-Gal disaccharide.</text>
</comment>
<comment type="miscellaneous">
    <text evidence="6">These protein fragments were extracted from an ancient mandible bone collected in Haiti.</text>
</comment>
<comment type="similarity">
    <text evidence="8">Belongs to the fibrillar collagen family.</text>
</comment>
<keyword id="KW-0903">Direct protein sequencing</keyword>
<keyword id="KW-0952">Extinct organism protein</keyword>
<keyword id="KW-0272">Extracellular matrix</keyword>
<keyword id="KW-0325">Glycoprotein</keyword>
<keyword id="KW-0379">Hydroxylation</keyword>
<keyword id="KW-0597">Phosphoprotein</keyword>
<keyword id="KW-0964">Secreted</keyword>
<name>CO1A1_ACRSX</name>
<proteinExistence type="evidence at protein level"/>